<accession>Q823N6</accession>
<keyword id="KW-0963">Cytoplasm</keyword>
<keyword id="KW-0489">Methyltransferase</keyword>
<keyword id="KW-0698">rRNA processing</keyword>
<keyword id="KW-0949">S-adenosyl-L-methionine</keyword>
<keyword id="KW-0808">Transferase</keyword>
<comment type="function">
    <text evidence="1">Specifically methylates the N4 position of cytidine in position 1402 (C1402) of 16S rRNA.</text>
</comment>
<comment type="catalytic activity">
    <reaction evidence="1">
        <text>cytidine(1402) in 16S rRNA + S-adenosyl-L-methionine = N(4)-methylcytidine(1402) in 16S rRNA + S-adenosyl-L-homocysteine + H(+)</text>
        <dbReference type="Rhea" id="RHEA:42928"/>
        <dbReference type="Rhea" id="RHEA-COMP:10286"/>
        <dbReference type="Rhea" id="RHEA-COMP:10287"/>
        <dbReference type="ChEBI" id="CHEBI:15378"/>
        <dbReference type="ChEBI" id="CHEBI:57856"/>
        <dbReference type="ChEBI" id="CHEBI:59789"/>
        <dbReference type="ChEBI" id="CHEBI:74506"/>
        <dbReference type="ChEBI" id="CHEBI:82748"/>
        <dbReference type="EC" id="2.1.1.199"/>
    </reaction>
</comment>
<comment type="subcellular location">
    <subcellularLocation>
        <location evidence="1">Cytoplasm</location>
    </subcellularLocation>
</comment>
<comment type="similarity">
    <text evidence="1">Belongs to the methyltransferase superfamily. RsmH family.</text>
</comment>
<name>RSMH_CHLCV</name>
<evidence type="ECO:0000255" key="1">
    <source>
        <dbReference type="HAMAP-Rule" id="MF_01007"/>
    </source>
</evidence>
<organism>
    <name type="scientific">Chlamydia caviae (strain ATCC VR-813 / DSM 19441 / 03DC25 / GPIC)</name>
    <name type="common">Chlamydophila caviae</name>
    <dbReference type="NCBI Taxonomy" id="227941"/>
    <lineage>
        <taxon>Bacteria</taxon>
        <taxon>Pseudomonadati</taxon>
        <taxon>Chlamydiota</taxon>
        <taxon>Chlamydiia</taxon>
        <taxon>Chlamydiales</taxon>
        <taxon>Chlamydiaceae</taxon>
        <taxon>Chlamydia/Chlamydophila group</taxon>
        <taxon>Chlamydia</taxon>
    </lineage>
</organism>
<sequence length="297" mass="34096">MAETPFHIPVLVNECLSWFSDRNPRSFCDVTVGAGGHAEAFLSTYPSIISYDGSDRDATALSLARERLEKFGDRVHLHHASFEDLAQDPKENVYDGILADLGVSSMQLDTLSRGFSFQGEDHDLDMRMDTSQGITASEVLNTLREEELGKIFREYGEEPHWKNVANAIVHFRRRKKIITVKDLKEATARVFPSYRLRKKIHPLTLIFQALRVYVNQEDVQLKVLLESAMRWLAPKGRLVIISFCSSEDRPVKWFFREAEKSGLGKILTKKVVMPTYEEIRRNPRCRSAKLRCFEKTS</sequence>
<protein>
    <recommendedName>
        <fullName evidence="1">Ribosomal RNA small subunit methyltransferase H</fullName>
        <ecNumber evidence="1">2.1.1.199</ecNumber>
    </recommendedName>
    <alternativeName>
        <fullName evidence="1">16S rRNA m(4)C1402 methyltransferase</fullName>
    </alternativeName>
    <alternativeName>
        <fullName evidence="1">rRNA (cytosine-N(4)-)-methyltransferase RsmH</fullName>
    </alternativeName>
</protein>
<gene>
    <name evidence="1" type="primary">rsmH</name>
    <name type="synonym">mraW</name>
    <name type="ordered locus">CCA_00372</name>
</gene>
<reference key="1">
    <citation type="journal article" date="2003" name="Nucleic Acids Res.">
        <title>Genome sequence of Chlamydophila caviae (Chlamydia psittaci GPIC): examining the role of niche-specific genes in the evolution of the Chlamydiaceae.</title>
        <authorList>
            <person name="Read T.D."/>
            <person name="Myers G.S.A."/>
            <person name="Brunham R.C."/>
            <person name="Nelson W.C."/>
            <person name="Paulsen I.T."/>
            <person name="Heidelberg J.F."/>
            <person name="Holtzapple E.K."/>
            <person name="Khouri H.M."/>
            <person name="Federova N.B."/>
            <person name="Carty H.A."/>
            <person name="Umayam L.A."/>
            <person name="Haft D.H."/>
            <person name="Peterson J.D."/>
            <person name="Beanan M.J."/>
            <person name="White O."/>
            <person name="Salzberg S.L."/>
            <person name="Hsia R.-C."/>
            <person name="McClarty G."/>
            <person name="Rank R.G."/>
            <person name="Bavoil P.M."/>
            <person name="Fraser C.M."/>
        </authorList>
    </citation>
    <scope>NUCLEOTIDE SEQUENCE [LARGE SCALE GENOMIC DNA]</scope>
    <source>
        <strain>ATCC VR-813 / DSM 19441 / 03DC25 / GPIC</strain>
    </source>
</reference>
<feature type="chain" id="PRO_0000108604" description="Ribosomal RNA small subunit methyltransferase H">
    <location>
        <begin position="1"/>
        <end position="297"/>
    </location>
</feature>
<feature type="binding site" evidence="1">
    <location>
        <begin position="35"/>
        <end position="37"/>
    </location>
    <ligand>
        <name>S-adenosyl-L-methionine</name>
        <dbReference type="ChEBI" id="CHEBI:59789"/>
    </ligand>
</feature>
<feature type="binding site" evidence="1">
    <location>
        <position position="55"/>
    </location>
    <ligand>
        <name>S-adenosyl-L-methionine</name>
        <dbReference type="ChEBI" id="CHEBI:59789"/>
    </ligand>
</feature>
<feature type="binding site" evidence="1">
    <location>
        <position position="82"/>
    </location>
    <ligand>
        <name>S-adenosyl-L-methionine</name>
        <dbReference type="ChEBI" id="CHEBI:59789"/>
    </ligand>
</feature>
<feature type="binding site" evidence="1">
    <location>
        <position position="100"/>
    </location>
    <ligand>
        <name>S-adenosyl-L-methionine</name>
        <dbReference type="ChEBI" id="CHEBI:59789"/>
    </ligand>
</feature>
<feature type="binding site" evidence="1">
    <location>
        <position position="107"/>
    </location>
    <ligand>
        <name>S-adenosyl-L-methionine</name>
        <dbReference type="ChEBI" id="CHEBI:59789"/>
    </ligand>
</feature>
<dbReference type="EC" id="2.1.1.199" evidence="1"/>
<dbReference type="EMBL" id="AE015925">
    <property type="protein sequence ID" value="AAP05119.1"/>
    <property type="molecule type" value="Genomic_DNA"/>
</dbReference>
<dbReference type="RefSeq" id="WP_011006336.1">
    <property type="nucleotide sequence ID" value="NC_003361.3"/>
</dbReference>
<dbReference type="SMR" id="Q823N6"/>
<dbReference type="STRING" id="227941.CCA_00372"/>
<dbReference type="KEGG" id="cca:CCA_00372"/>
<dbReference type="eggNOG" id="COG0275">
    <property type="taxonomic scope" value="Bacteria"/>
</dbReference>
<dbReference type="HOGENOM" id="CLU_038422_3_0_0"/>
<dbReference type="OrthoDB" id="9806637at2"/>
<dbReference type="Proteomes" id="UP000002193">
    <property type="component" value="Chromosome"/>
</dbReference>
<dbReference type="GO" id="GO:0005737">
    <property type="term" value="C:cytoplasm"/>
    <property type="evidence" value="ECO:0007669"/>
    <property type="project" value="UniProtKB-SubCell"/>
</dbReference>
<dbReference type="GO" id="GO:0071424">
    <property type="term" value="F:rRNA (cytosine-N4-)-methyltransferase activity"/>
    <property type="evidence" value="ECO:0007669"/>
    <property type="project" value="UniProtKB-UniRule"/>
</dbReference>
<dbReference type="GO" id="GO:0070475">
    <property type="term" value="P:rRNA base methylation"/>
    <property type="evidence" value="ECO:0007669"/>
    <property type="project" value="UniProtKB-UniRule"/>
</dbReference>
<dbReference type="FunFam" id="1.10.150.170:FF:000003">
    <property type="entry name" value="Ribosomal RNA small subunit methyltransferase H"/>
    <property type="match status" value="1"/>
</dbReference>
<dbReference type="Gene3D" id="1.10.150.170">
    <property type="entry name" value="Putative methyltransferase TM0872, insert domain"/>
    <property type="match status" value="1"/>
</dbReference>
<dbReference type="Gene3D" id="3.40.50.150">
    <property type="entry name" value="Vaccinia Virus protein VP39"/>
    <property type="match status" value="1"/>
</dbReference>
<dbReference type="HAMAP" id="MF_01007">
    <property type="entry name" value="16SrRNA_methyltr_H"/>
    <property type="match status" value="1"/>
</dbReference>
<dbReference type="InterPro" id="IPR002903">
    <property type="entry name" value="RsmH"/>
</dbReference>
<dbReference type="InterPro" id="IPR023397">
    <property type="entry name" value="SAM-dep_MeTrfase_MraW_recog"/>
</dbReference>
<dbReference type="InterPro" id="IPR029063">
    <property type="entry name" value="SAM-dependent_MTases_sf"/>
</dbReference>
<dbReference type="NCBIfam" id="TIGR00006">
    <property type="entry name" value="16S rRNA (cytosine(1402)-N(4))-methyltransferase RsmH"/>
    <property type="match status" value="1"/>
</dbReference>
<dbReference type="PANTHER" id="PTHR11265:SF0">
    <property type="entry name" value="12S RRNA N4-METHYLCYTIDINE METHYLTRANSFERASE"/>
    <property type="match status" value="1"/>
</dbReference>
<dbReference type="PANTHER" id="PTHR11265">
    <property type="entry name" value="S-ADENOSYL-METHYLTRANSFERASE MRAW"/>
    <property type="match status" value="1"/>
</dbReference>
<dbReference type="Pfam" id="PF01795">
    <property type="entry name" value="Methyltransf_5"/>
    <property type="match status" value="1"/>
</dbReference>
<dbReference type="PIRSF" id="PIRSF004486">
    <property type="entry name" value="MraW"/>
    <property type="match status" value="1"/>
</dbReference>
<dbReference type="SUPFAM" id="SSF81799">
    <property type="entry name" value="Putative methyltransferase TM0872, insert domain"/>
    <property type="match status" value="1"/>
</dbReference>
<dbReference type="SUPFAM" id="SSF53335">
    <property type="entry name" value="S-adenosyl-L-methionine-dependent methyltransferases"/>
    <property type="match status" value="1"/>
</dbReference>
<proteinExistence type="inferred from homology"/>